<reference key="1">
    <citation type="journal article" date="1991" name="J. Immunol.">
        <title>CTLA-4 and CD28 activated lymphocyte molecules are closely related in both mouse and human as to sequence, message expression, gene structure, and chromosomal location.</title>
        <authorList>
            <person name="Harper K."/>
            <person name="Balzano C."/>
            <person name="Rouvier E."/>
            <person name="Mattei M.-G."/>
            <person name="Luciani M.-F."/>
            <person name="Golstein P."/>
        </authorList>
    </citation>
    <scope>NUCLEOTIDE SEQUENCE [GENOMIC DNA / MRNA] (ISOFORM 1)</scope>
    <scope>TISSUE SPECIFICITY</scope>
    <scope>ALTERNATIVE SPLICING</scope>
    <scope>VARIANT ALA-17</scope>
</reference>
<reference key="2">
    <citation type="journal article" date="2001" name="Genomics">
        <title>Assembly and annotation of human chromosome 2q33 sequence containing the CD28, CTLA4, and ICOS gene cluster: analysis by computational, comparative, and microarray approaches.</title>
        <authorList>
            <person name="Ling V."/>
            <person name="Wu P.W."/>
            <person name="Finnerty H.F."/>
            <person name="Agostino M.J."/>
            <person name="Graham J.R."/>
            <person name="Chen S."/>
            <person name="Jussiff J.M."/>
            <person name="Fisk G.J."/>
            <person name="Miller C.P."/>
            <person name="Collins M."/>
        </authorList>
    </citation>
    <scope>NUCLEOTIDE SEQUENCE [GENOMIC DNA]</scope>
</reference>
<reference key="3">
    <citation type="journal article" date="2008" name="Clin. Immunol.">
        <title>Identification of CTLA-4 isoforms produced by alternative splicing and their association with myasthenia gravis.</title>
        <authorList>
            <person name="Gu M."/>
            <person name="Kakoulidou M."/>
            <person name="Giscombe R."/>
            <person name="Pirskanen R."/>
            <person name="Lefvert A.K."/>
            <person name="Klareskog L."/>
            <person name="Wang X."/>
        </authorList>
    </citation>
    <scope>NUCLEOTIDE SEQUENCE [MRNA] (ISOFORMS 2; 3 AND 4)</scope>
    <scope>VARIANT ALA-17</scope>
    <scope>ALTERNATIVE SPLICING</scope>
    <scope>POLYMORPHISM</scope>
</reference>
<reference key="4">
    <citation type="submission" date="2001-08" db="EMBL/GenBank/DDBJ databases">
        <title>Full length sequence of hCTLA4 cDNA.</title>
        <authorList>
            <person name="Wu P.W."/>
            <person name="Ling V."/>
        </authorList>
    </citation>
    <scope>NUCLEOTIDE SEQUENCE [MRNA] (ISOFORM 1)</scope>
</reference>
<reference key="5">
    <citation type="submission" date="2006-01" db="EMBL/GenBank/DDBJ databases">
        <authorList>
            <consortium name="NIEHS SNPs program"/>
        </authorList>
    </citation>
    <scope>NUCLEOTIDE SEQUENCE [GENOMIC DNA]</scope>
</reference>
<reference key="6">
    <citation type="journal article" date="2005" name="Nature">
        <title>Generation and annotation of the DNA sequences of human chromosomes 2 and 4.</title>
        <authorList>
            <person name="Hillier L.W."/>
            <person name="Graves T.A."/>
            <person name="Fulton R.S."/>
            <person name="Fulton L.A."/>
            <person name="Pepin K.H."/>
            <person name="Minx P."/>
            <person name="Wagner-McPherson C."/>
            <person name="Layman D."/>
            <person name="Wylie K."/>
            <person name="Sekhon M."/>
            <person name="Becker M.C."/>
            <person name="Fewell G.A."/>
            <person name="Delehaunty K.D."/>
            <person name="Miner T.L."/>
            <person name="Nash W.E."/>
            <person name="Kremitzki C."/>
            <person name="Oddy L."/>
            <person name="Du H."/>
            <person name="Sun H."/>
            <person name="Bradshaw-Cordum H."/>
            <person name="Ali J."/>
            <person name="Carter J."/>
            <person name="Cordes M."/>
            <person name="Harris A."/>
            <person name="Isak A."/>
            <person name="van Brunt A."/>
            <person name="Nguyen C."/>
            <person name="Du F."/>
            <person name="Courtney L."/>
            <person name="Kalicki J."/>
            <person name="Ozersky P."/>
            <person name="Abbott S."/>
            <person name="Armstrong J."/>
            <person name="Belter E.A."/>
            <person name="Caruso L."/>
            <person name="Cedroni M."/>
            <person name="Cotton M."/>
            <person name="Davidson T."/>
            <person name="Desai A."/>
            <person name="Elliott G."/>
            <person name="Erb T."/>
            <person name="Fronick C."/>
            <person name="Gaige T."/>
            <person name="Haakenson W."/>
            <person name="Haglund K."/>
            <person name="Holmes A."/>
            <person name="Harkins R."/>
            <person name="Kim K."/>
            <person name="Kruchowski S.S."/>
            <person name="Strong C.M."/>
            <person name="Grewal N."/>
            <person name="Goyea E."/>
            <person name="Hou S."/>
            <person name="Levy A."/>
            <person name="Martinka S."/>
            <person name="Mead K."/>
            <person name="McLellan M.D."/>
            <person name="Meyer R."/>
            <person name="Randall-Maher J."/>
            <person name="Tomlinson C."/>
            <person name="Dauphin-Kohlberg S."/>
            <person name="Kozlowicz-Reilly A."/>
            <person name="Shah N."/>
            <person name="Swearengen-Shahid S."/>
            <person name="Snider J."/>
            <person name="Strong J.T."/>
            <person name="Thompson J."/>
            <person name="Yoakum M."/>
            <person name="Leonard S."/>
            <person name="Pearman C."/>
            <person name="Trani L."/>
            <person name="Radionenko M."/>
            <person name="Waligorski J.E."/>
            <person name="Wang C."/>
            <person name="Rock S.M."/>
            <person name="Tin-Wollam A.-M."/>
            <person name="Maupin R."/>
            <person name="Latreille P."/>
            <person name="Wendl M.C."/>
            <person name="Yang S.-P."/>
            <person name="Pohl C."/>
            <person name="Wallis J.W."/>
            <person name="Spieth J."/>
            <person name="Bieri T.A."/>
            <person name="Berkowicz N."/>
            <person name="Nelson J.O."/>
            <person name="Osborne J."/>
            <person name="Ding L."/>
            <person name="Meyer R."/>
            <person name="Sabo A."/>
            <person name="Shotland Y."/>
            <person name="Sinha P."/>
            <person name="Wohldmann P.E."/>
            <person name="Cook L.L."/>
            <person name="Hickenbotham M.T."/>
            <person name="Eldred J."/>
            <person name="Williams D."/>
            <person name="Jones T.A."/>
            <person name="She X."/>
            <person name="Ciccarelli F.D."/>
            <person name="Izaurralde E."/>
            <person name="Taylor J."/>
            <person name="Schmutz J."/>
            <person name="Myers R.M."/>
            <person name="Cox D.R."/>
            <person name="Huang X."/>
            <person name="McPherson J.D."/>
            <person name="Mardis E.R."/>
            <person name="Clifton S.W."/>
            <person name="Warren W.C."/>
            <person name="Chinwalla A.T."/>
            <person name="Eddy S.R."/>
            <person name="Marra M.A."/>
            <person name="Ovcharenko I."/>
            <person name="Furey T.S."/>
            <person name="Miller W."/>
            <person name="Eichler E.E."/>
            <person name="Bork P."/>
            <person name="Suyama M."/>
            <person name="Torrents D."/>
            <person name="Waterston R.H."/>
            <person name="Wilson R.K."/>
        </authorList>
    </citation>
    <scope>NUCLEOTIDE SEQUENCE [LARGE SCALE GENOMIC DNA]</scope>
</reference>
<reference key="7">
    <citation type="journal article" date="2004" name="Genome Res.">
        <title>The status, quality, and expansion of the NIH full-length cDNA project: the Mammalian Gene Collection (MGC).</title>
        <authorList>
            <consortium name="The MGC Project Team"/>
        </authorList>
    </citation>
    <scope>NUCLEOTIDE SEQUENCE [LARGE SCALE MRNA] (ISOFORM 1)</scope>
    <source>
        <tissue>Lung</tissue>
    </source>
</reference>
<reference key="8">
    <citation type="journal article" date="1988" name="Eur. J. Immunol.">
        <title>Human Ig superfamily CTLA-4 gene: chromosomal localization and identity of protein sequence between murine and human CTLA-4 cytoplasmic domains.</title>
        <authorList>
            <person name="Dariavach P."/>
            <person name="Mattei M.-G."/>
            <person name="Golstein P."/>
            <person name="Lefranc M.-P."/>
        </authorList>
    </citation>
    <scope>NUCLEOTIDE SEQUENCE [GENOMIC DNA] OF 38-223</scope>
    <source>
        <tissue>Lymphocyte</tissue>
    </source>
</reference>
<reference key="9">
    <citation type="submission" date="1997-02" db="EMBL/GenBank/DDBJ databases">
        <authorList>
            <person name="Oaks M.K."/>
        </authorList>
    </citation>
    <scope>NUCLEOTIDE SEQUENCE [MRNA] OF 38-223 (ISOFORM 5)</scope>
    <source>
        <tissue>Lymph node</tissue>
    </source>
</reference>
<reference key="10">
    <citation type="journal article" date="1999" name="Genomics">
        <title>Complete sequence determination of the mouse and human CTLA4 gene loci: cross-species DNA sequence similarity beyond exon borders.</title>
        <authorList>
            <person name="Ling V."/>
            <person name="Wu P.W."/>
            <person name="Finnerty H.F."/>
            <person name="Sharpe A.H."/>
            <person name="Gray G.S."/>
            <person name="Collins M."/>
        </authorList>
    </citation>
    <scope>NUCLEOTIDE SEQUENCE [GENOMIC DNA] OF 140-223</scope>
    <scope>TISSUE SPECIFICITY</scope>
</reference>
<reference key="11">
    <citation type="journal article" date="1991" name="J. Exp. Med.">
        <title>CTLA-4 is a second receptor for the B cell activation antigen B7.</title>
        <authorList>
            <person name="Linsley P.S."/>
            <person name="Brady W."/>
            <person name="Urnes M."/>
            <person name="Griosmaire L.S."/>
            <person name="Damle N.K."/>
            <person name="Ledbetter J.A."/>
        </authorList>
    </citation>
    <scope>FUNCTION</scope>
</reference>
<reference key="12">
    <citation type="journal article" date="1997" name="Immunity">
        <title>Tyrosine phosphorylation controls internalization of CTLA-4 by regulating its interaction with clathrin-associated adaptor complex AP-2.</title>
        <authorList>
            <person name="Shiratori T."/>
            <person name="Miyatake S."/>
            <person name="Ohno H."/>
            <person name="Nakaseko C."/>
            <person name="Isono K."/>
            <person name="Bonifacino J.S."/>
            <person name="Saito T."/>
        </authorList>
    </citation>
    <scope>PHOSPHORYLATION AT TYR-201</scope>
</reference>
<reference key="13">
    <citation type="journal article" date="1998" name="Biochem. Biophys. Res. Commun.">
        <title>Resting lymphocyte kinase (Rlk/Txk) phosphorylates the YVKM motif and regulates PI 3-kinase binding to T-cell antigen CTLA-4.</title>
        <authorList>
            <person name="Schneider H."/>
            <person name="Schwartzberg P.L."/>
            <person name="Rudd C.E."/>
        </authorList>
    </citation>
    <scope>PHOSPHORYLATION AT TYR-201</scope>
</reference>
<reference key="14">
    <citation type="journal article" date="2000" name="J. Cell. Biochem.">
        <title>Janus kinase 2 is associated with a box 1-like motif and phosphorylates a critical tyrosine residue in the cytoplasmic region of cytotoxic T lymphocyte associated molecule-4.</title>
        <authorList>
            <person name="Chikuma S."/>
            <person name="Murakami M."/>
            <person name="Tanaka K."/>
            <person name="Uede T."/>
        </authorList>
    </citation>
    <scope>PHOSPHORYLATION AT TYR-201 BY JAK2</scope>
</reference>
<reference key="15">
    <citation type="journal article" date="2003" name="Nature">
        <title>Association of the T-cell regulatory gene CTLA4 with susceptibility to autoimmune disease.</title>
        <authorList>
            <person name="Ueda H."/>
            <person name="Howson J.M."/>
            <person name="Esposito L."/>
            <person name="Heward J."/>
            <person name="Snook H."/>
            <person name="Chamberlain G."/>
            <person name="Rainbow D.B."/>
            <person name="Hunter K.M."/>
            <person name="Smith A.N."/>
            <person name="Di Genova G."/>
            <person name="Herr M.H."/>
            <person name="Dahlman I."/>
            <person name="Payne F."/>
            <person name="Smyth D."/>
            <person name="Lowe C."/>
            <person name="Twells R.C."/>
            <person name="Howlett S."/>
            <person name="Healy B."/>
            <person name="Nutland S."/>
            <person name="Rance H.E."/>
            <person name="Everett V."/>
            <person name="Smink L.J."/>
            <person name="Lam A.C."/>
            <person name="Cordell H.J."/>
            <person name="Walker N.M."/>
            <person name="Bordin C."/>
            <person name="Hulme J."/>
            <person name="Motzo C."/>
            <person name="Cucca F."/>
            <person name="Hess J.F."/>
            <person name="Metzker M.L."/>
            <person name="Rogers J."/>
            <person name="Gregory S."/>
            <person name="Allahabadia A."/>
            <person name="Nithiyananthan R."/>
            <person name="Tuomilehto-Wolf E."/>
            <person name="Tuomilehto J."/>
            <person name="Bingley P."/>
            <person name="Gillespie K.M."/>
            <person name="Undlien D.E."/>
            <person name="Ronningen K.S."/>
            <person name="Guja C."/>
            <person name="Ionescu-Tirgoviste C."/>
            <person name="Savage D.A."/>
            <person name="Maxwell A.P."/>
            <person name="Carson D.J."/>
            <person name="Patterson C.C."/>
            <person name="Franklyn J.A."/>
            <person name="Clayton D.G."/>
            <person name="Peterson L.B."/>
            <person name="Wicker L.S."/>
            <person name="Todd J.A."/>
            <person name="Gough S.C."/>
        </authorList>
    </citation>
    <scope>POLYMORPHISM</scope>
</reference>
<reference key="16">
    <citation type="journal article" date="2005" name="J. Immunol.">
        <title>Hierarchical regulation of CTLA-4 dimer-based lattice formation and its biological relevance for T cell inactivation.</title>
        <authorList>
            <person name="Darlington P.J."/>
            <person name="Kirchhof M.G."/>
            <person name="Criado G."/>
            <person name="Sondhi J."/>
            <person name="Madrenas J."/>
        </authorList>
    </citation>
    <scope>GLYCOSYLATION AT ASN-113 AND ASN-145</scope>
</reference>
<reference key="17">
    <citation type="journal article" date="2006" name="Annu. Rev. Immunol.">
        <title>A molecular perspective of CTLA-4 function.</title>
        <authorList>
            <person name="Teft W.A."/>
            <person name="Kirchhof M.G."/>
            <person name="Madrenas J."/>
        </authorList>
    </citation>
    <scope>FUNCTION</scope>
    <scope>TISSUE SPECIFICITY</scope>
</reference>
<reference key="18">
    <citation type="journal article" date="2008" name="Trends Immunol.">
        <title>CTLA-4 trafficking and surface expression.</title>
        <authorList>
            <person name="Valk E."/>
            <person name="Rudd C.E."/>
            <person name="Schneider H."/>
        </authorList>
    </citation>
    <scope>SUBCELLULAR LOCATION</scope>
</reference>
<reference key="19">
    <citation type="journal article" date="2009" name="Immunol. Rev.">
        <title>The clinical utility of inhibiting CD28-mediated costimulation.</title>
        <authorList>
            <person name="Linsley P.S."/>
            <person name="Nadler S.G."/>
        </authorList>
    </citation>
    <scope>PHARMACEUTICAL</scope>
</reference>
<reference key="20">
    <citation type="journal article" date="1997" name="Nat. Struct. Biol.">
        <title>Solution structure of human CTLA-4 and delineation of a CD80/CD86 binding site conserved in CD28.</title>
        <authorList>
            <person name="Metzler W.J."/>
            <person name="Bajorath J."/>
            <person name="Fenderson W."/>
            <person name="Shaw S.Y."/>
            <person name="Constantine K.L."/>
            <person name="Naemura J."/>
            <person name="Leytze G."/>
            <person name="Peach R.J."/>
            <person name="Lavoie T.B."/>
            <person name="Mueller L."/>
            <person name="Linsley P.S."/>
        </authorList>
    </citation>
    <scope>STRUCTURE BY NMR OF 37-161</scope>
    <scope>DISULFIDE BONDS</scope>
</reference>
<reference key="21">
    <citation type="journal article" date="2001" name="Nature">
        <title>Structural basis for co-stimulation by the human CTLA-4/B7-2 complex.</title>
        <authorList>
            <person name="Schwartz J.C."/>
            <person name="Zhang X."/>
            <person name="Fedorov A.A."/>
            <person name="Nathenson S.G."/>
            <person name="Almo S.C."/>
        </authorList>
    </citation>
    <scope>X-RAY CRYSTALLOGRAPHY (3.2 ANGSTROMS) OF 36-161 IN COMPLEX WITH CD86</scope>
    <scope>SUBUNIT</scope>
    <scope>DISULFIDE BONDS</scope>
</reference>
<reference key="22">
    <citation type="journal article" date="2001" name="Nature">
        <title>Crystal structure of the B7-1/CTLA-4 complex that inhibits human immune responses.</title>
        <authorList>
            <person name="Stamper C.C."/>
            <person name="Zhang Y."/>
            <person name="Tobin J.F."/>
            <person name="Erbe D.V."/>
            <person name="Ikemizu S."/>
            <person name="Davis S.J."/>
            <person name="Stahl M.L."/>
            <person name="Seehra J."/>
            <person name="Somers W.S."/>
            <person name="Mosyak L."/>
        </authorList>
    </citation>
    <scope>X-RAY CRYSTALLOGRAPHY (3.0 ANGSTROMS) OF 36-161 IN COMPLEX WITH CD80</scope>
    <scope>SUBUNIT</scope>
    <scope>DISULFIDE BONDS</scope>
    <scope>GLYCOSYLATION AT ASN-113 AND ASN-145</scope>
</reference>
<reference key="23">
    <citation type="submission" date="2008-01" db="PDB data bank">
        <title>High affinity molecular recognition and functional blockade of CTLA-4 by an engineered human lipocalin.</title>
        <authorList>
            <person name="Schonfeld D.L."/>
            <person name="Matschiner G."/>
            <person name="Chatwell L."/>
            <person name="Trentmann S."/>
            <person name="Schlehuber S."/>
            <person name="Hohlbaum A."/>
            <person name="Skerra A."/>
        </authorList>
    </citation>
    <scope>X-RAY CRYSTALLOGRAPHY (2.10 ANGSTROMS) OF 38-161</scope>
    <scope>DISULFIDE BONDS</scope>
    <scope>SUBUNIT</scope>
</reference>
<reference key="24">
    <citation type="journal article" date="2011" name="J. Biol. Chem.">
        <title>Rigid-body ligand recognition drives cytotoxic T-lymphocyte antigen 4 (CTLA-4) receptor triggering.</title>
        <authorList>
            <person name="Yu C."/>
            <person name="Sonnen A.F."/>
            <person name="George R."/>
            <person name="Dessailly B.H."/>
            <person name="Stagg L.J."/>
            <person name="Evans E.J."/>
            <person name="Orengo C.A."/>
            <person name="Stuart D.I."/>
            <person name="Ladbury J.E."/>
            <person name="Ikemizu S."/>
            <person name="Gilbert R.J."/>
            <person name="Davis S.J."/>
        </authorList>
    </citation>
    <scope>X-RAY CRYSTALLOGRAPHY (1.8 ANGSTROMS) OF 36-161</scope>
    <scope>GLYCOSYLATION AT ASN-113</scope>
    <scope>SUBUNIT</scope>
    <scope>DISULFIDE BONDS</scope>
</reference>
<reference evidence="35" key="25">
    <citation type="journal article" date="2017" name="Proc. Natl. Acad. Sci. U.S.A.">
        <title>Structural basis for cancer immunotherapy by the first-in-class checkpoint inhibitor ipilimumab.</title>
        <authorList>
            <person name="Ramagopal U.A."/>
            <person name="Liu W."/>
            <person name="Garrett-Thomson S.C."/>
            <person name="Bonanno J.B."/>
            <person name="Yan Q."/>
            <person name="Srinivasan M."/>
            <person name="Wong S.C."/>
            <person name="Bell A."/>
            <person name="Mankikar S."/>
            <person name="Rangan V.S."/>
            <person name="Deshpande S."/>
            <person name="Korman A.J."/>
            <person name="Almo S.C."/>
        </authorList>
    </citation>
    <scope>X-RAY CRYSTALLOGRAPHY (3.00 ANGSTROMS) OF 37-154 IN COMPLEX WITH THERAPEUTIC ANTIBODY IPILIMUMAB</scope>
    <scope>SUBUNIT</scope>
    <scope>INTERACTION WITH CD80; CD86 AND ICOSLG</scope>
    <scope>SUBCELLULAR LOCATION</scope>
    <scope>TOPOLOGY</scope>
    <scope>DISULFIDE BONDS</scope>
    <scope>MUTAGENESIS OF VAL-45; LEU-47; SER-49; ARG-70; LYS-130; GLU-132; TYR-139 AND ILE-143</scope>
</reference>
<reference key="26">
    <citation type="journal article" date="1997" name="Hum. Mol. Genet.">
        <title>Insulin-dependent diabetes mellitus (IDDM) is associated with CTLA4 polymorphisms in multiple ethnic groups.</title>
        <authorList>
            <person name="Marron M.P."/>
            <person name="Raffel L.J."/>
            <person name="Garchon H.-J."/>
            <person name="Jacob C.O."/>
            <person name="Serrano-Rios M."/>
            <person name="Martinez Larrad M.T."/>
            <person name="Teng W.-P."/>
            <person name="Park Y."/>
            <person name="Zhang Z.-X."/>
            <person name="Goldstein D.R."/>
            <person name="Tao Y.-W."/>
            <person name="Beaurain G."/>
            <person name="Bach J.-F."/>
            <person name="Huang H.-S."/>
            <person name="Luo D.-F."/>
            <person name="Zeidler A."/>
            <person name="Rotter J.I."/>
            <person name="Yang M.C.K."/>
            <person name="Modilevsky T."/>
            <person name="Maclaren N.K."/>
            <person name="She J.-X."/>
        </authorList>
    </citation>
    <scope>VARIANT ALA-17</scope>
    <scope>INVOLVEMENT IN T1D12</scope>
</reference>
<reference key="27">
    <citation type="journal article" date="1998" name="Gut">
        <title>CTLA-4 gene polymorphism is associated with predisposition to coeliac disease.</title>
        <authorList>
            <person name="Djilali-Saiah I."/>
            <person name="Schmitz J."/>
            <person name="Harfouch-Hammoud E."/>
            <person name="Mougenot J.-F."/>
            <person name="Bach J.-F."/>
            <person name="Caillat-Zucman S."/>
        </authorList>
    </citation>
    <scope>POLYMORPHISM</scope>
    <scope>INVOLVEMENT IN CELIAC3</scope>
</reference>
<reference key="28">
    <citation type="journal article" date="1999" name="Lancet">
        <title>Cytotoxic T lymphocyte antigen-4 (CTLA-4) gene polymorphism confers susceptibility to thyroid associated orbitopathy.</title>
        <authorList>
            <person name="Vaidya B."/>
            <person name="Imrie H."/>
            <person name="Perros P."/>
            <person name="Dickinson J."/>
            <person name="McCarthy M.I."/>
            <person name="Kendall-Taylor P."/>
            <person name="Pearce S.H.S."/>
        </authorList>
    </citation>
    <scope>VARIANT ALA-17</scope>
    <scope>INVOLVEMENT IN THYROID ASSOCIATED ORBITOPATHY</scope>
</reference>
<reference key="29">
    <citation type="journal article" date="2000" name="Mol. Genet. Metab.">
        <title>Complex association analysis of Graves disease using a set of polymorphic markers.</title>
        <authorList>
            <person name="Chistyakov D.A."/>
            <person name="Savost'anov K.V."/>
            <person name="Turakulov R.I."/>
            <person name="Petunina N.A."/>
            <person name="Trukhina L.V."/>
            <person name="Kudinova A.V."/>
            <person name="Balabolkin M.I."/>
            <person name="Nosikov V.V."/>
        </authorList>
    </citation>
    <scope>POLYMORPHISM</scope>
    <scope>VARIANT ALA-17</scope>
    <scope>INVOLVEMENT IN GRAVES DISEASE</scope>
</reference>
<reference key="30">
    <citation type="journal article" date="2000" name="Am. J. Hum. Genet.">
        <title>Familial primary pulmonary hypertension (gene PPH1) is caused by mutations in the bone morphogenetic protein receptor-II gene.</title>
        <authorList>
            <person name="Deng Z."/>
            <person name="Morse J.H."/>
            <person name="Slager S.L."/>
            <person name="Cuervo N."/>
            <person name="Moore K.J."/>
            <person name="Venetos G."/>
            <person name="Kalachikov S."/>
            <person name="Cayanis E."/>
            <person name="Fischer S.G."/>
            <person name="Barst R.J."/>
            <person name="Hodge S.E."/>
            <person name="Knowles J.A."/>
        </authorList>
    </citation>
    <scope>VARIANT ALA-17</scope>
</reference>
<reference key="31">
    <citation type="journal article" date="2004" name="Eur. J. Hum. Genet.">
        <title>Evidence for CTLA4 as a susceptibility gene for systemic lupus erythematosus.</title>
        <authorList>
            <person name="Barreto M."/>
            <person name="Santos E."/>
            <person name="Ferreira R."/>
            <person name="Fesel C."/>
            <person name="Fontes M.F."/>
            <person name="Pereira C."/>
            <person name="Martins B."/>
            <person name="Andreia R."/>
            <person name="Viana J.F."/>
            <person name="Crespo F."/>
            <person name="Vasconcelos C."/>
            <person name="Ferreira C."/>
            <person name="Vicente A.M."/>
        </authorList>
    </citation>
    <scope>POLYMORPHISM</scope>
    <scope>INVOLVEMENT IN SYSTEMIC LUPUS ERYTHEMATOSUS</scope>
</reference>
<reference key="32">
    <citation type="journal article" date="2004" name="J. Virol.">
        <title>Cytotoxic T-lymphocyte antigen 4 gene and recovery from hepatitis B virus infection.</title>
        <authorList>
            <person name="Thio C.L."/>
            <person name="Mosbruger T.L."/>
            <person name="Kaslow R.A."/>
            <person name="Karp C.L."/>
            <person name="Strathdee S.A."/>
            <person name="Vlahov D."/>
            <person name="O'Brien S.J."/>
            <person name="Astemborski J."/>
            <person name="Thomas D.L."/>
        </authorList>
    </citation>
    <scope>POLYMORPHISM</scope>
    <scope>INVOLVEMENT IN SUSCEPTIBILITY TO HBV INFECTION</scope>
    <scope>VARIANT ALA-17</scope>
</reference>
<reference key="33">
    <citation type="journal article" date="2005" name="Eur. J. Hum. Genet.">
        <title>A common CTLA4 haplotype associated with coeliac disease.</title>
        <authorList>
            <person name="Hunt K.A."/>
            <person name="McGovern D.P.B."/>
            <person name="Kumar P.J."/>
            <person name="Ghosh S."/>
            <person name="Travis S.P.L."/>
            <person name="Walters J.R.F."/>
            <person name="Jewell D.P."/>
            <person name="Playford R.J."/>
            <person name="van Heel D.A."/>
        </authorList>
    </citation>
    <scope>POLYMORPHISM</scope>
    <scope>INVOLVEMENT IN CELIAC3</scope>
</reference>
<reference key="34">
    <citation type="journal article" date="2005" name="Hum. Genet.">
        <title>CTLA-4 polymorphisms and systemic lupus erythematosus (SLE): a meta-analysis.</title>
        <authorList>
            <person name="Lee Y.H."/>
            <person name="Harley J.B."/>
            <person name="Nath S.K."/>
        </authorList>
    </citation>
    <scope>POLYMORPHISM</scope>
    <scope>INVOLVEMENT IN SYSTEMIC LUPUS ERYTHEMATOSUS</scope>
</reference>
<reference key="35">
    <citation type="journal article" date="2014" name="Nat. Med.">
        <title>Autosomal dominant immune dysregulation syndrome in humans with CTLA4 mutations.</title>
        <authorList>
            <person name="Schubert D."/>
            <person name="Bode C."/>
            <person name="Kenefeck R."/>
            <person name="Hou T.Z."/>
            <person name="Wing J.B."/>
            <person name="Kennedy A."/>
            <person name="Bulashevska A."/>
            <person name="Petersen B.S."/>
            <person name="Schaeffer A.A."/>
            <person name="Gruening B.A."/>
            <person name="Unger S."/>
            <person name="Frede N."/>
            <person name="Baumann U."/>
            <person name="Witte T."/>
            <person name="Schmidt R.E."/>
            <person name="Dueckers G."/>
            <person name="Niehues T."/>
            <person name="Seneviratne S."/>
            <person name="Kanariou M."/>
            <person name="Speckmann C."/>
            <person name="Ehl S."/>
            <person name="Rensing-Ehl A."/>
            <person name="Warnatz K."/>
            <person name="Rakhmanov M."/>
            <person name="Thimme R."/>
            <person name="Hasselblatt P."/>
            <person name="Emmerich F."/>
            <person name="Cathomen T."/>
            <person name="Backofen R."/>
            <person name="Fisch P."/>
            <person name="Seidl M."/>
            <person name="May A."/>
            <person name="Schmitt-Graeff A."/>
            <person name="Ikemizu S."/>
            <person name="Salzer U."/>
            <person name="Franke A."/>
            <person name="Sakaguchi S."/>
            <person name="Walker L.S."/>
            <person name="Sansom D.M."/>
            <person name="Grimbacher B."/>
        </authorList>
    </citation>
    <scope>POLYMORPHISM</scope>
    <scope>INVOLVEMENT IN IDAIL</scope>
    <scope>VARIANT IDAIL TRP-70</scope>
</reference>
<reference key="36">
    <citation type="journal article" date="2014" name="Science">
        <title>Immune dysregulation in human subjects with heterozygous germline mutations in CTLA4.</title>
        <authorList>
            <person name="Kuehn H.S."/>
            <person name="Ouyang W."/>
            <person name="Lo B."/>
            <person name="Deenick E.K."/>
            <person name="Niemela J.E."/>
            <person name="Avery D.T."/>
            <person name="Schickel J.N."/>
            <person name="Tran D.Q."/>
            <person name="Stoddard J."/>
            <person name="Zhang Y."/>
            <person name="Frucht D.M."/>
            <person name="Dumitriu B."/>
            <person name="Scheinberg P."/>
            <person name="Folio L.R."/>
            <person name="Frein C.A."/>
            <person name="Price S."/>
            <person name="Koh C."/>
            <person name="Heller T."/>
            <person name="Seroogy C.M."/>
            <person name="Huttenlocher A."/>
            <person name="Rao V.K."/>
            <person name="Su H.C."/>
            <person name="Kleiner D."/>
            <person name="Notarangelo L.D."/>
            <person name="Rampertaap Y."/>
            <person name="Olivier K.N."/>
            <person name="McElwee J."/>
            <person name="Hughes J."/>
            <person name="Pittaluga S."/>
            <person name="Oliveira J.B."/>
            <person name="Meffre E."/>
            <person name="Fleisher T.A."/>
            <person name="Holland S.M."/>
            <person name="Lenardo M.J."/>
            <person name="Tangye S.G."/>
            <person name="Uzel G."/>
        </authorList>
    </citation>
    <scope>POLYMORPHISM</scope>
    <scope>INVOLVEMENT IN IDAIL</scope>
</reference>
<sequence>MACLGFQRHKAQLNLATRTWPCTLLFFLLFIPVFCKAMHVAQPAVVLASSRGIASFVCEYASPGKATEVRVTVLRQADSQVTEVCAATYMMGNELTFLDDSICTGTSSGNQVNLTIQGLRAMDTGLYICKVELMYPPPYYLGIGNGTQIYVIDPEPCPDSDFLLWILAAVSSGLFFYSFLLTAVSLSKMLKKRSPLTTGVYVKMPPTEPECEKQFQPYFIPIN</sequence>
<proteinExistence type="evidence at protein level"/>
<name>CTLA4_HUMAN</name>
<dbReference type="EMBL" id="L15006">
    <property type="protein sequence ID" value="AAB59385.1"/>
    <property type="molecule type" value="mRNA"/>
</dbReference>
<dbReference type="EMBL" id="M74363">
    <property type="protein sequence ID" value="AAA52127.1"/>
    <property type="molecule type" value="Genomic_DNA"/>
</dbReference>
<dbReference type="EMBL" id="AF411058">
    <property type="protein sequence ID" value="AAL40932.1"/>
    <property type="molecule type" value="Genomic_DNA"/>
</dbReference>
<dbReference type="EMBL" id="AY792514">
    <property type="protein sequence ID" value="AAV66331.1"/>
    <property type="molecule type" value="mRNA"/>
</dbReference>
<dbReference type="EMBL" id="AY999702">
    <property type="protein sequence ID" value="AAY00166.1"/>
    <property type="molecule type" value="mRNA"/>
</dbReference>
<dbReference type="EMBL" id="DQ785106">
    <property type="protein sequence ID" value="ABG85285.1"/>
    <property type="molecule type" value="mRNA"/>
</dbReference>
<dbReference type="EMBL" id="AF414120">
    <property type="protein sequence ID" value="AAL07473.1"/>
    <property type="molecule type" value="mRNA"/>
</dbReference>
<dbReference type="EMBL" id="DQ357942">
    <property type="protein sequence ID" value="ABC67470.1"/>
    <property type="molecule type" value="Genomic_DNA"/>
</dbReference>
<dbReference type="EMBL" id="AC010138">
    <property type="protein sequence ID" value="AAX93176.1"/>
    <property type="molecule type" value="Genomic_DNA"/>
</dbReference>
<dbReference type="EMBL" id="BC074842">
    <property type="protein sequence ID" value="AAH74842.1"/>
    <property type="molecule type" value="mRNA"/>
</dbReference>
<dbReference type="EMBL" id="BC074893">
    <property type="protein sequence ID" value="AAH74893.1"/>
    <property type="molecule type" value="mRNA"/>
</dbReference>
<dbReference type="EMBL" id="AH002733">
    <property type="protein sequence ID" value="AAA52773.1"/>
    <property type="molecule type" value="Genomic_DNA"/>
</dbReference>
<dbReference type="EMBL" id="U90273">
    <property type="protein sequence ID" value="AAD00698.1"/>
    <property type="molecule type" value="mRNA"/>
</dbReference>
<dbReference type="EMBL" id="AF142144">
    <property type="protein sequence ID" value="AAF02499.1"/>
    <property type="molecule type" value="Genomic_DNA"/>
</dbReference>
<dbReference type="CCDS" id="CCDS2362.1">
    <molecule id="P16410-1"/>
</dbReference>
<dbReference type="CCDS" id="CCDS42803.1">
    <molecule id="P16410-5"/>
</dbReference>
<dbReference type="PIR" id="S08614">
    <property type="entry name" value="S08614"/>
</dbReference>
<dbReference type="RefSeq" id="NP_001032720.1">
    <molecule id="P16410-5"/>
    <property type="nucleotide sequence ID" value="NM_001037631.3"/>
</dbReference>
<dbReference type="RefSeq" id="NP_005205.2">
    <molecule id="P16410-1"/>
    <property type="nucleotide sequence ID" value="NM_005214.4"/>
</dbReference>
<dbReference type="PDB" id="1AH1">
    <property type="method" value="NMR"/>
    <property type="chains" value="A=37-161"/>
</dbReference>
<dbReference type="PDB" id="1H6E">
    <property type="method" value="X-ray"/>
    <property type="resolution" value="3.60 A"/>
    <property type="chains" value="P=197-207"/>
</dbReference>
<dbReference type="PDB" id="1I85">
    <property type="method" value="X-ray"/>
    <property type="resolution" value="3.20 A"/>
    <property type="chains" value="C/D=36-161"/>
</dbReference>
<dbReference type="PDB" id="1I8L">
    <property type="method" value="X-ray"/>
    <property type="resolution" value="3.00 A"/>
    <property type="chains" value="C/D=36-161"/>
</dbReference>
<dbReference type="PDB" id="2X44">
    <property type="method" value="X-ray"/>
    <property type="resolution" value="2.60 A"/>
    <property type="chains" value="D=36-161"/>
</dbReference>
<dbReference type="PDB" id="3BX7">
    <property type="method" value="X-ray"/>
    <property type="resolution" value="2.10 A"/>
    <property type="chains" value="C=38-161"/>
</dbReference>
<dbReference type="PDB" id="3OSK">
    <property type="method" value="X-ray"/>
    <property type="resolution" value="1.80 A"/>
    <property type="chains" value="A/B=36-161"/>
</dbReference>
<dbReference type="PDB" id="5GGV">
    <property type="method" value="X-ray"/>
    <property type="resolution" value="2.00 A"/>
    <property type="chains" value="Y=36-161"/>
</dbReference>
<dbReference type="PDB" id="5TRU">
    <property type="method" value="X-ray"/>
    <property type="resolution" value="3.00 A"/>
    <property type="chains" value="C/c=37-154"/>
</dbReference>
<dbReference type="PDB" id="5XJ3">
    <property type="method" value="X-ray"/>
    <property type="resolution" value="3.20 A"/>
    <property type="chains" value="C/F/I/L=36-161"/>
</dbReference>
<dbReference type="PDB" id="6RP8">
    <property type="method" value="X-ray"/>
    <property type="resolution" value="2.60 A"/>
    <property type="chains" value="C/c=37-154"/>
</dbReference>
<dbReference type="PDB" id="6RPJ">
    <property type="method" value="X-ray"/>
    <property type="resolution" value="3.25 A"/>
    <property type="chains" value="A/C/E/G=37-156"/>
</dbReference>
<dbReference type="PDB" id="6RQM">
    <property type="method" value="X-ray"/>
    <property type="resolution" value="3.00 A"/>
    <property type="chains" value="A=37-161"/>
</dbReference>
<dbReference type="PDB" id="6XY2">
    <property type="method" value="X-ray"/>
    <property type="resolution" value="3.05 A"/>
    <property type="chains" value="A=38-160"/>
</dbReference>
<dbReference type="PDB" id="7CIO">
    <property type="method" value="X-ray"/>
    <property type="resolution" value="1.10 A"/>
    <property type="chains" value="B=199-206"/>
</dbReference>
<dbReference type="PDB" id="7DV4">
    <property type="method" value="X-ray"/>
    <property type="resolution" value="2.38 A"/>
    <property type="chains" value="A/C/E/G=36-153"/>
</dbReference>
<dbReference type="PDB" id="7ELX">
    <property type="method" value="X-ray"/>
    <property type="resolution" value="2.14 A"/>
    <property type="chains" value="C/c=36-161"/>
</dbReference>
<dbReference type="PDB" id="7SU0">
    <property type="method" value="X-ray"/>
    <property type="resolution" value="2.41 A"/>
    <property type="chains" value="C/D=36-153"/>
</dbReference>
<dbReference type="PDB" id="7SU1">
    <property type="method" value="X-ray"/>
    <property type="resolution" value="2.53 A"/>
    <property type="chains" value="C=36-153"/>
</dbReference>
<dbReference type="PDB" id="8GAB">
    <property type="method" value="X-ray"/>
    <property type="resolution" value="2.72 A"/>
    <property type="chains" value="B/D=36-161"/>
</dbReference>
<dbReference type="PDB" id="8HIT">
    <property type="method" value="X-ray"/>
    <property type="resolution" value="3.20 A"/>
    <property type="chains" value="C=35-154"/>
</dbReference>
<dbReference type="PDB" id="9DQ3">
    <property type="method" value="X-ray"/>
    <property type="resolution" value="1.64 A"/>
    <property type="chains" value="C=36-153"/>
</dbReference>
<dbReference type="PDBsum" id="1AH1"/>
<dbReference type="PDBsum" id="1H6E"/>
<dbReference type="PDBsum" id="1I85"/>
<dbReference type="PDBsum" id="1I8L"/>
<dbReference type="PDBsum" id="2X44"/>
<dbReference type="PDBsum" id="3BX7"/>
<dbReference type="PDBsum" id="3OSK"/>
<dbReference type="PDBsum" id="5GGV"/>
<dbReference type="PDBsum" id="5TRU"/>
<dbReference type="PDBsum" id="5XJ3"/>
<dbReference type="PDBsum" id="6RP8"/>
<dbReference type="PDBsum" id="6RPJ"/>
<dbReference type="PDBsum" id="6RQM"/>
<dbReference type="PDBsum" id="6XY2"/>
<dbReference type="PDBsum" id="7CIO"/>
<dbReference type="PDBsum" id="7DV4"/>
<dbReference type="PDBsum" id="7ELX"/>
<dbReference type="PDBsum" id="7SU0"/>
<dbReference type="PDBsum" id="7SU1"/>
<dbReference type="PDBsum" id="8GAB"/>
<dbReference type="PDBsum" id="8HIT"/>
<dbReference type="PDBsum" id="9DQ3"/>
<dbReference type="SMR" id="P16410"/>
<dbReference type="BioGRID" id="107875">
    <property type="interactions" value="134"/>
</dbReference>
<dbReference type="DIP" id="DIP-35607N"/>
<dbReference type="ELM" id="P16410"/>
<dbReference type="FunCoup" id="P16410">
    <property type="interactions" value="584"/>
</dbReference>
<dbReference type="IntAct" id="P16410">
    <property type="interactions" value="106"/>
</dbReference>
<dbReference type="MINT" id="P16410"/>
<dbReference type="STRING" id="9606.ENSP00000497102"/>
<dbReference type="BindingDB" id="P16410"/>
<dbReference type="ChEMBL" id="CHEMBL2364164"/>
<dbReference type="DrugBank" id="DB01281">
    <property type="generic name" value="Abatacept"/>
</dbReference>
<dbReference type="DrugBank" id="DB06186">
    <property type="generic name" value="Ipilimumab"/>
</dbReference>
<dbReference type="DrugBank" id="DB11771">
    <property type="generic name" value="Tremelimumab"/>
</dbReference>
<dbReference type="DrugCentral" id="P16410"/>
<dbReference type="GuidetoPHARMACOLOGY" id="2743"/>
<dbReference type="GlyCosmos" id="P16410">
    <property type="glycosylation" value="2 sites, No reported glycans"/>
</dbReference>
<dbReference type="GlyGen" id="P16410">
    <property type="glycosylation" value="3 sites"/>
</dbReference>
<dbReference type="iPTMnet" id="P16410"/>
<dbReference type="PhosphoSitePlus" id="P16410"/>
<dbReference type="BioMuta" id="CTLA4"/>
<dbReference type="DMDM" id="27735177"/>
<dbReference type="MassIVE" id="P16410"/>
<dbReference type="PaxDb" id="9606-ENSP00000303939"/>
<dbReference type="PeptideAtlas" id="P16410"/>
<dbReference type="ABCD" id="P16410">
    <property type="antibodies" value="206 sequenced antibodies"/>
</dbReference>
<dbReference type="Antibodypedia" id="19961">
    <property type="antibodies" value="2139 antibodies from 51 providers"/>
</dbReference>
<dbReference type="CPTC" id="P16410">
    <property type="antibodies" value="3 antibodies"/>
</dbReference>
<dbReference type="DNASU" id="1493"/>
<dbReference type="Ensembl" id="ENST00000295854.10">
    <molecule id="P16410-5"/>
    <property type="protein sequence ID" value="ENSP00000295854.6"/>
    <property type="gene ID" value="ENSG00000163599.18"/>
</dbReference>
<dbReference type="Ensembl" id="ENST00000487393.1">
    <molecule id="P16410-3"/>
    <property type="protein sequence ID" value="ENSP00000497319.1"/>
    <property type="gene ID" value="ENSG00000163599.18"/>
</dbReference>
<dbReference type="Ensembl" id="ENST00000648405.2">
    <molecule id="P16410-1"/>
    <property type="protein sequence ID" value="ENSP00000497102.1"/>
    <property type="gene ID" value="ENSG00000163599.18"/>
</dbReference>
<dbReference type="GeneID" id="1493"/>
<dbReference type="KEGG" id="hsa:1493"/>
<dbReference type="MANE-Select" id="ENST00000648405.2">
    <property type="protein sequence ID" value="ENSP00000497102.1"/>
    <property type="RefSeq nucleotide sequence ID" value="NM_005214.5"/>
    <property type="RefSeq protein sequence ID" value="NP_005205.2"/>
</dbReference>
<dbReference type="UCSC" id="uc002vak.3">
    <molecule id="P16410-1"/>
    <property type="organism name" value="human"/>
</dbReference>
<dbReference type="AGR" id="HGNC:2505"/>
<dbReference type="CTD" id="1493"/>
<dbReference type="DisGeNET" id="1493"/>
<dbReference type="GeneCards" id="CTLA4"/>
<dbReference type="HGNC" id="HGNC:2505">
    <property type="gene designation" value="CTLA4"/>
</dbReference>
<dbReference type="HPA" id="ENSG00000163599">
    <property type="expression patterns" value="Tissue enriched (lymphoid)"/>
</dbReference>
<dbReference type="MalaCards" id="CTLA4"/>
<dbReference type="MIM" id="109100">
    <property type="type" value="phenotype"/>
</dbReference>
<dbReference type="MIM" id="123890">
    <property type="type" value="gene"/>
</dbReference>
<dbReference type="MIM" id="152700">
    <property type="type" value="phenotype"/>
</dbReference>
<dbReference type="MIM" id="601388">
    <property type="type" value="phenotype"/>
</dbReference>
<dbReference type="MIM" id="609755">
    <property type="type" value="phenotype"/>
</dbReference>
<dbReference type="MIM" id="610424">
    <property type="type" value="phenotype"/>
</dbReference>
<dbReference type="MIM" id="616100">
    <property type="type" value="phenotype"/>
</dbReference>
<dbReference type="neXtProt" id="NX_P16410"/>
<dbReference type="OpenTargets" id="ENSG00000163599"/>
<dbReference type="Orphanet" id="391490">
    <property type="disease" value="Adult-onset myasthenia gravis"/>
</dbReference>
<dbReference type="Orphanet" id="436159">
    <property type="disease" value="Autoimmune lymphoproliferative syndrome due to CTLA4 haploinsuffiency"/>
</dbReference>
<dbReference type="Orphanet" id="2584">
    <property type="disease" value="Classic mycosis fungoides"/>
</dbReference>
<dbReference type="Orphanet" id="900">
    <property type="disease" value="Granulomatosis with polyangiitis"/>
</dbReference>
<dbReference type="Orphanet" id="3162">
    <property type="disease" value="Sezary syndrome"/>
</dbReference>
<dbReference type="Orphanet" id="536">
    <property type="disease" value="Systemic lupus erythematosus"/>
</dbReference>
<dbReference type="PharmGKB" id="PA27006"/>
<dbReference type="VEuPathDB" id="HostDB:ENSG00000163599"/>
<dbReference type="eggNOG" id="ENOG502RZVK">
    <property type="taxonomic scope" value="Eukaryota"/>
</dbReference>
<dbReference type="GeneTree" id="ENSGT00530000063873"/>
<dbReference type="HOGENOM" id="CLU_085095_0_0_1"/>
<dbReference type="InParanoid" id="P16410"/>
<dbReference type="OMA" id="QMVEVCA"/>
<dbReference type="OrthoDB" id="9908091at2759"/>
<dbReference type="PAN-GO" id="P16410">
    <property type="GO annotations" value="4 GO annotations based on evolutionary models"/>
</dbReference>
<dbReference type="PhylomeDB" id="P16410"/>
<dbReference type="TreeFam" id="TF335679"/>
<dbReference type="PathwayCommons" id="P16410"/>
<dbReference type="Reactome" id="R-HSA-389356">
    <property type="pathway name" value="Co-stimulation by CD28"/>
</dbReference>
<dbReference type="Reactome" id="R-HSA-389513">
    <property type="pathway name" value="Co-inhibition by CTLA4"/>
</dbReference>
<dbReference type="Reactome" id="R-HSA-8877330">
    <property type="pathway name" value="RUNX1 and FOXP3 control the development of regulatory T lymphocytes (Tregs)"/>
</dbReference>
<dbReference type="SignaLink" id="P16410"/>
<dbReference type="SIGNOR" id="P16410"/>
<dbReference type="BioGRID-ORCS" id="1493">
    <property type="hits" value="6 hits in 1155 CRISPR screens"/>
</dbReference>
<dbReference type="EvolutionaryTrace" id="P16410"/>
<dbReference type="GeneWiki" id="CTLA-4"/>
<dbReference type="GenomeRNAi" id="1493"/>
<dbReference type="Pharos" id="P16410">
    <property type="development level" value="Tclin"/>
</dbReference>
<dbReference type="PRO" id="PR:P16410"/>
<dbReference type="Proteomes" id="UP000005640">
    <property type="component" value="Chromosome 2"/>
</dbReference>
<dbReference type="RNAct" id="P16410">
    <property type="molecule type" value="protein"/>
</dbReference>
<dbReference type="Bgee" id="ENSG00000163599">
    <property type="expression patterns" value="Expressed in lymph node and 124 other cell types or tissues"/>
</dbReference>
<dbReference type="GO" id="GO:0045334">
    <property type="term" value="C:clathrin-coated endocytic vesicle"/>
    <property type="evidence" value="ECO:0000314"/>
    <property type="project" value="BHF-UCL"/>
</dbReference>
<dbReference type="GO" id="GO:0009897">
    <property type="term" value="C:external side of plasma membrane"/>
    <property type="evidence" value="ECO:0000314"/>
    <property type="project" value="BHF-UCL"/>
</dbReference>
<dbReference type="GO" id="GO:0005794">
    <property type="term" value="C:Golgi apparatus"/>
    <property type="evidence" value="ECO:0000314"/>
    <property type="project" value="BHF-UCL"/>
</dbReference>
<dbReference type="GO" id="GO:0048471">
    <property type="term" value="C:perinuclear region of cytoplasm"/>
    <property type="evidence" value="ECO:0000314"/>
    <property type="project" value="BHF-UCL"/>
</dbReference>
<dbReference type="GO" id="GO:0005886">
    <property type="term" value="C:plasma membrane"/>
    <property type="evidence" value="ECO:0000315"/>
    <property type="project" value="UniProtKB"/>
</dbReference>
<dbReference type="GO" id="GO:0098636">
    <property type="term" value="C:protein complex involved in cell adhesion"/>
    <property type="evidence" value="ECO:0000314"/>
    <property type="project" value="MGI"/>
</dbReference>
<dbReference type="GO" id="GO:0002250">
    <property type="term" value="P:adaptive immune response"/>
    <property type="evidence" value="ECO:0007669"/>
    <property type="project" value="UniProtKB-KW"/>
</dbReference>
<dbReference type="GO" id="GO:0050853">
    <property type="term" value="P:B cell receptor signaling pathway"/>
    <property type="evidence" value="ECO:0000315"/>
    <property type="project" value="UniProtKB"/>
</dbReference>
<dbReference type="GO" id="GO:0006974">
    <property type="term" value="P:DNA damage response"/>
    <property type="evidence" value="ECO:0000315"/>
    <property type="project" value="UniProtKB"/>
</dbReference>
<dbReference type="GO" id="GO:0006955">
    <property type="term" value="P:immune response"/>
    <property type="evidence" value="ECO:0000304"/>
    <property type="project" value="ProtInc"/>
</dbReference>
<dbReference type="GO" id="GO:0030889">
    <property type="term" value="P:negative regulation of B cell proliferation"/>
    <property type="evidence" value="ECO:0000315"/>
    <property type="project" value="UniProtKB"/>
</dbReference>
<dbReference type="GO" id="GO:0045590">
    <property type="term" value="P:negative regulation of regulatory T cell differentiation"/>
    <property type="evidence" value="ECO:0000314"/>
    <property type="project" value="BHF-UCL"/>
</dbReference>
<dbReference type="GO" id="GO:0042130">
    <property type="term" value="P:negative regulation of T cell proliferation"/>
    <property type="evidence" value="ECO:0007669"/>
    <property type="project" value="Ensembl"/>
</dbReference>
<dbReference type="GO" id="GO:0043065">
    <property type="term" value="P:positive regulation of apoptotic process"/>
    <property type="evidence" value="ECO:0000315"/>
    <property type="project" value="UniProtKB"/>
</dbReference>
<dbReference type="GO" id="GO:0050852">
    <property type="term" value="P:T cell receptor signaling pathway"/>
    <property type="evidence" value="ECO:0000318"/>
    <property type="project" value="GO_Central"/>
</dbReference>
<dbReference type="CDD" id="cd05721">
    <property type="entry name" value="IgV_CTLA-4"/>
    <property type="match status" value="1"/>
</dbReference>
<dbReference type="FunFam" id="2.60.40.10:FF:000686">
    <property type="entry name" value="Cytotoxic T-lymphocyte protein 4"/>
    <property type="match status" value="1"/>
</dbReference>
<dbReference type="Gene3D" id="2.60.40.10">
    <property type="entry name" value="Immunoglobulins"/>
    <property type="match status" value="1"/>
</dbReference>
<dbReference type="InterPro" id="IPR008096">
    <property type="entry name" value="CTLA4"/>
</dbReference>
<dbReference type="InterPro" id="IPR040216">
    <property type="entry name" value="CTLA4/CD28"/>
</dbReference>
<dbReference type="InterPro" id="IPR036179">
    <property type="entry name" value="Ig-like_dom_sf"/>
</dbReference>
<dbReference type="InterPro" id="IPR013783">
    <property type="entry name" value="Ig-like_fold"/>
</dbReference>
<dbReference type="InterPro" id="IPR003599">
    <property type="entry name" value="Ig_sub"/>
</dbReference>
<dbReference type="InterPro" id="IPR013106">
    <property type="entry name" value="Ig_V-set"/>
</dbReference>
<dbReference type="PANTHER" id="PTHR11494">
    <property type="entry name" value="CYTOTOXIC T-LYMPHOCYTE PROTEIN"/>
    <property type="match status" value="1"/>
</dbReference>
<dbReference type="PANTHER" id="PTHR11494:SF8">
    <property type="entry name" value="CYTOTOXIC T-LYMPHOCYTE PROTEIN 4"/>
    <property type="match status" value="1"/>
</dbReference>
<dbReference type="Pfam" id="PF07686">
    <property type="entry name" value="V-set"/>
    <property type="match status" value="1"/>
</dbReference>
<dbReference type="PRINTS" id="PR01720">
    <property type="entry name" value="CTLANTIGEN4"/>
</dbReference>
<dbReference type="SMART" id="SM00409">
    <property type="entry name" value="IG"/>
    <property type="match status" value="1"/>
</dbReference>
<dbReference type="SMART" id="SM00406">
    <property type="entry name" value="IGv"/>
    <property type="match status" value="1"/>
</dbReference>
<dbReference type="SUPFAM" id="SSF48726">
    <property type="entry name" value="Immunoglobulin"/>
    <property type="match status" value="1"/>
</dbReference>
<organism>
    <name type="scientific">Homo sapiens</name>
    <name type="common">Human</name>
    <dbReference type="NCBI Taxonomy" id="9606"/>
    <lineage>
        <taxon>Eukaryota</taxon>
        <taxon>Metazoa</taxon>
        <taxon>Chordata</taxon>
        <taxon>Craniata</taxon>
        <taxon>Vertebrata</taxon>
        <taxon>Euteleostomi</taxon>
        <taxon>Mammalia</taxon>
        <taxon>Eutheria</taxon>
        <taxon>Euarchontoglires</taxon>
        <taxon>Primates</taxon>
        <taxon>Haplorrhini</taxon>
        <taxon>Catarrhini</taxon>
        <taxon>Hominidae</taxon>
        <taxon>Homo</taxon>
    </lineage>
</organism>
<protein>
    <recommendedName>
        <fullName>Cytotoxic T-lymphocyte protein 4</fullName>
    </recommendedName>
    <alternativeName>
        <fullName>Cytotoxic T-lymphocyte-associated antigen 4</fullName>
        <shortName>CTLA-4</shortName>
    </alternativeName>
    <cdAntigenName>CD152</cdAntigenName>
</protein>
<gene>
    <name type="primary">CTLA4</name>
    <name type="synonym">CD152</name>
</gene>
<keyword id="KW-0002">3D-structure</keyword>
<keyword id="KW-1064">Adaptive immunity</keyword>
<keyword id="KW-0025">Alternative splicing</keyword>
<keyword id="KW-1003">Cell membrane</keyword>
<keyword id="KW-0219">Diabetes mellitus</keyword>
<keyword id="KW-0225">Disease variant</keyword>
<keyword id="KW-1015">Disulfide bond</keyword>
<keyword id="KW-0325">Glycoprotein</keyword>
<keyword id="KW-0391">Immunity</keyword>
<keyword id="KW-0393">Immunoglobulin domain</keyword>
<keyword id="KW-0472">Membrane</keyword>
<keyword id="KW-0582">Pharmaceutical</keyword>
<keyword id="KW-0597">Phosphoprotein</keyword>
<keyword id="KW-1267">Proteomics identification</keyword>
<keyword id="KW-1185">Reference proteome</keyword>
<keyword id="KW-0732">Signal</keyword>
<keyword id="KW-0772">Systemic lupus erythematosus</keyword>
<keyword id="KW-0812">Transmembrane</keyword>
<keyword id="KW-1133">Transmembrane helix</keyword>
<evidence type="ECO:0000255" key="1"/>
<evidence type="ECO:0000269" key="2">
    <source>
    </source>
</evidence>
<evidence type="ECO:0000269" key="3">
    <source>
    </source>
</evidence>
<evidence type="ECO:0000269" key="4">
    <source>
    </source>
</evidence>
<evidence type="ECO:0000269" key="5">
    <source>
    </source>
</evidence>
<evidence type="ECO:0000269" key="6">
    <source>
    </source>
</evidence>
<evidence type="ECO:0000269" key="7">
    <source>
    </source>
</evidence>
<evidence type="ECO:0000269" key="8">
    <source>
    </source>
</evidence>
<evidence type="ECO:0000269" key="9">
    <source>
    </source>
</evidence>
<evidence type="ECO:0000269" key="10">
    <source>
    </source>
</evidence>
<evidence type="ECO:0000269" key="11">
    <source>
    </source>
</evidence>
<evidence type="ECO:0000269" key="12">
    <source>
    </source>
</evidence>
<evidence type="ECO:0000269" key="13">
    <source>
    </source>
</evidence>
<evidence type="ECO:0000269" key="14">
    <source>
    </source>
</evidence>
<evidence type="ECO:0000269" key="15">
    <source>
    </source>
</evidence>
<evidence type="ECO:0000269" key="16">
    <source>
    </source>
</evidence>
<evidence type="ECO:0000269" key="17">
    <source>
    </source>
</evidence>
<evidence type="ECO:0000269" key="18">
    <source>
    </source>
</evidence>
<evidence type="ECO:0000269" key="19">
    <source>
    </source>
</evidence>
<evidence type="ECO:0000269" key="20">
    <source>
    </source>
</evidence>
<evidence type="ECO:0000269" key="21">
    <source>
    </source>
</evidence>
<evidence type="ECO:0000269" key="22">
    <source>
    </source>
</evidence>
<evidence type="ECO:0000269" key="23">
    <source>
    </source>
</evidence>
<evidence type="ECO:0000269" key="24">
    <source>
    </source>
</evidence>
<evidence type="ECO:0000269" key="25">
    <source>
    </source>
</evidence>
<evidence type="ECO:0000269" key="26">
    <source>
    </source>
</evidence>
<evidence type="ECO:0000269" key="27">
    <source>
    </source>
</evidence>
<evidence type="ECO:0000269" key="28">
    <source>
    </source>
</evidence>
<evidence type="ECO:0000269" key="29">
    <source ref="23"/>
</evidence>
<evidence type="ECO:0000303" key="30">
    <source>
    </source>
</evidence>
<evidence type="ECO:0000303" key="31">
    <source ref="9"/>
</evidence>
<evidence type="ECO:0000305" key="32"/>
<evidence type="ECO:0000305" key="33">
    <source>
    </source>
</evidence>
<evidence type="ECO:0007744" key="34">
    <source>
        <dbReference type="PDB" id="3BX7"/>
    </source>
</evidence>
<evidence type="ECO:0007744" key="35">
    <source>
        <dbReference type="PDB" id="5TRU"/>
    </source>
</evidence>
<evidence type="ECO:0007829" key="36">
    <source>
        <dbReference type="PDB" id="1AH1"/>
    </source>
</evidence>
<evidence type="ECO:0007829" key="37">
    <source>
        <dbReference type="PDB" id="1I85"/>
    </source>
</evidence>
<evidence type="ECO:0007829" key="38">
    <source>
        <dbReference type="PDB" id="1I8L"/>
    </source>
</evidence>
<evidence type="ECO:0007829" key="39">
    <source>
        <dbReference type="PDB" id="3OSK"/>
    </source>
</evidence>
<evidence type="ECO:0007829" key="40">
    <source>
        <dbReference type="PDB" id="5GGV"/>
    </source>
</evidence>
<evidence type="ECO:0007829" key="41">
    <source>
        <dbReference type="PDB" id="6RP8"/>
    </source>
</evidence>
<accession>P16410</accession>
<accession>A0N1S0</accession>
<accession>E9PDH0</accession>
<accession>O95653</accession>
<accession>Q0PP65</accession>
<accession>Q52MC1</accession>
<accession>Q53TD5</accession>
<accession>Q5S005</accession>
<accession>Q8WXJ1</accession>
<accession>Q96P43</accession>
<accession>Q9UKN9</accession>
<comment type="function">
    <text evidence="16 18">Inhibitory receptor acting as a major negative regulator of T-cell responses. The affinity of CTLA4 for its natural B7 family ligands, CD80 and CD86, is considerably stronger than the affinity of their cognate stimulatory coreceptor CD28.</text>
</comment>
<comment type="subunit">
    <text evidence="8 9 21 24 29">Homodimer; disulfide-linked (PubMed:11279501, PubMed:11279502, PubMed:21156796, PubMed:28484017, Ref.23). Binds to CD80/B7-1 and CD86/B7.2 (PubMed:11279501, PubMed:11279502, PubMed:28484017). Interacts with ICOSLG (PubMed:28484017).</text>
</comment>
<comment type="interaction">
    <interactant intactId="EBI-1030991">
        <id>P16410</id>
    </interactant>
    <interactant intactId="EBI-1031024">
        <id>P33681</id>
        <label>CD80</label>
    </interactant>
    <organismsDiffer>false</organismsDiffer>
    <experiments>7</experiments>
</comment>
<comment type="interaction">
    <interactant intactId="EBI-1030991">
        <id>P16410</id>
    </interactant>
    <interactant intactId="EBI-1030956">
        <id>P42081</id>
        <label>CD86</label>
    </interactant>
    <organismsDiffer>false</organismsDiffer>
    <experiments>3</experiments>
</comment>
<comment type="interaction">
    <interactant intactId="EBI-1030991">
        <id>P16410</id>
    </interactant>
    <interactant intactId="EBI-12019274">
        <id>Q4LDR2</id>
        <label>CTXN3</label>
    </interactant>
    <organismsDiffer>false</organismsDiffer>
    <experiments>3</experiments>
</comment>
<comment type="interaction">
    <interactant intactId="EBI-1030991">
        <id>P16410</id>
    </interactant>
    <interactant intactId="EBI-1052167">
        <id>P50851</id>
        <label>LRBA</label>
    </interactant>
    <organismsDiffer>false</organismsDiffer>
    <experiments>2</experiments>
</comment>
<comment type="interaction">
    <interactant intactId="EBI-1030991">
        <id>P16410</id>
    </interactant>
    <interactant intactId="EBI-750078">
        <id>Q13021</id>
        <label>MALL</label>
    </interactant>
    <organismsDiffer>false</organismsDiffer>
    <experiments>3</experiments>
</comment>
<comment type="interaction">
    <interactant intactId="EBI-1030991">
        <id>P16410</id>
    </interactant>
    <interactant intactId="EBI-79464">
        <id>P27986</id>
        <label>PIK3R1</label>
    </interactant>
    <organismsDiffer>false</organismsDiffer>
    <experiments>3</experiments>
</comment>
<comment type="interaction">
    <interactant intactId="EBI-1030991">
        <id>P16410</id>
    </interactant>
    <interactant intactId="EBI-10173151">
        <id>A2RU14</id>
        <label>TMEM218</label>
    </interactant>
    <organismsDiffer>false</organismsDiffer>
    <experiments>3</experiments>
</comment>
<comment type="subcellular location">
    <subcellularLocation>
        <location evidence="19 24">Cell membrane</location>
        <topology evidence="19 24">Single-pass type I membrane protein</topology>
    </subcellularLocation>
    <text>Exists primarily an intracellular antigen whose surface expression is tightly regulated by restricted trafficking to the cell surface and rapid internalization.</text>
</comment>
<comment type="alternative products">
    <event type="alternative splicing"/>
    <isoform>
        <id>P16410-1</id>
        <name>1</name>
        <sequence type="displayed"/>
    </isoform>
    <isoform>
        <id>P16410-2</id>
        <name>2</name>
        <name>ss-CTLA-4</name>
        <sequence type="described" ref="VSP_041284"/>
    </isoform>
    <isoform>
        <id>P16410-3</id>
        <name>3</name>
        <sequence type="described" ref="VSP_041284 VSP_041287"/>
    </isoform>
    <isoform>
        <id>P16410-4</id>
        <name>4</name>
        <sequence type="described" ref="VSP_041285 VSP_041286 VSP_041287"/>
    </isoform>
    <isoform>
        <id>P16410-5</id>
        <name>5</name>
        <sequence type="described" ref="VSP_047238 VSP_047239"/>
    </isoform>
</comment>
<comment type="tissue specificity">
    <text evidence="4 16 17">Widely expressed with highest levels in lymphoid tissues. Detected in activated T-cells where expression levels are 30- to 50-fold less than CD28, the stimulatory coreceptor, on the cell surface following activation.</text>
</comment>
<comment type="PTM">
    <text evidence="9 15 21">N-glycosylation is important for dimerization.</text>
</comment>
<comment type="PTM">
    <text evidence="5 25 28">Phosphorylation at Tyr-201 prevents binding to the AP-2 adapter complex, blocks endocytosis, and leads to retention of CTLA4 on the cell surface.</text>
</comment>
<comment type="polymorphism">
    <text evidence="2 7 10 11 12 13 14 20 22 23">Genetic variations in CTLA4 are associated with susceptibility to several autoimmune disorders (PubMed:10189842, PubMed:10924276, PubMed:12724780, PubMed:15138458, PubMed:15657618, PubMed:15688186, PubMed:18595775, PubMed:25213377, PubMed:25329329). They influence responsiveness to hepatitis B virus (HBV) infection [MIM:610424] (PubMed:15452244).</text>
</comment>
<comment type="disease" evidence="11 14">
    <disease id="DI-02648">
        <name>Systemic lupus erythematosus</name>
        <acronym>SLE</acronym>
        <description>A chronic, relapsing, inflammatory, and often febrile multisystemic disorder of connective tissue, characterized principally by involvement of the skin, joints, kidneys and serosal membranes. It is of unknown etiology, but is thought to represent a failure of the regulatory mechanisms of the autoimmune system. The disease is marked by a wide range of system dysfunctions, an elevated erythrocyte sedimentation rate, and the formation of LE cells in the blood or bone marrow.</description>
        <dbReference type="MIM" id="152700"/>
    </disease>
    <text>Disease susceptibility is associated with variants affecting the gene represented in this entry.</text>
</comment>
<comment type="disease">
    <text evidence="7">Genetic variations in CTLA4 may influence susceptibility to Graves disease, an autoimmune disorder associated with overactivity of the thyroid gland and hyperthyroidism.</text>
</comment>
<comment type="disease" evidence="27">
    <disease id="DI-02777">
        <name>Type 1 diabetes mellitus 12</name>
        <acronym>T1D12</acronym>
        <description>A multifactorial disorder of glucose homeostasis that is characterized by susceptibility to ketoacidosis in the absence of insulin therapy. Clinical features are polydipsia, polyphagia and polyuria which result from hyperglycemia-induced osmotic diuresis and secondary thirst. These derangements result in long-term complications that affect the eyes, kidneys, nerves, and blood vessels.</description>
        <dbReference type="MIM" id="601388"/>
    </disease>
    <text>Disease susceptibility is associated with variants affecting the gene represented in this entry.</text>
</comment>
<comment type="disease" evidence="2 13">
    <disease id="DI-02883">
        <name>Celiac disease 3</name>
        <acronym>CELIAC3</acronym>
        <description>A multifactorial, chronic disorder of the small intestine caused by intolerance to gluten. It is characterized by immune-mediated enteropathy associated with failed intestinal absorption, and malnutrition. In predisposed individuals, the ingestion of gluten-containing food such as wheat and rye induces a flat jejunal mucosa with infiltration of lymphocytes.</description>
        <dbReference type="MIM" id="609755"/>
    </disease>
    <text>Disease susceptibility is associated with variants affecting the gene represented in this entry.</text>
</comment>
<comment type="disease" evidence="22 23">
    <disease id="DI-04302">
        <name>Immune dysregulation with autoimmunity, immunodeficiency, and lymphoproliferation</name>
        <acronym>IDAIL</acronym>
        <description>An autosomal dominant primary immunodeficiency characterized by severe autoimmunity, infiltration of non-lymphoid organs, such as the intestine, lungs and brain, by hyperactive T cells and B cells, autoimmune cytopenias, and hypogammaglobulinemia in early childhood.</description>
        <dbReference type="MIM" id="616100"/>
    </disease>
    <text>The disease is caused by variants affecting the gene represented in this entry.</text>
</comment>
<comment type="pharmaceutical">
    <text>Engineered fusion proteins consisting of the extracellular domain of CTLA4 and the IgG Fc region (Ctla4-Ig), inhibit T-cell-dependent antibody responses, and are used as immunosuppressive agents. They are soluble, have an enhanced affinity for B7 ligands and act as a competitive inhibitor of CD28.</text>
</comment>
<comment type="miscellaneous">
    <text>The therapeutic antibody Ipilimumab competes for the binding site of the endogenous ligands CD80/B7-1, CD86/B7-2 and ICOSLG.</text>
</comment>
<comment type="online information" name="Wikipedia">
    <link uri="https://en.wikipedia.org/wiki/CTLA-4"/>
    <text>CLTA-4 entry</text>
</comment>
<feature type="signal peptide" evidence="1">
    <location>
        <begin position="1"/>
        <end position="35"/>
    </location>
</feature>
<feature type="chain" id="PRO_0000014734" description="Cytotoxic T-lymphocyte protein 4">
    <location>
        <begin position="36"/>
        <end position="223"/>
    </location>
</feature>
<feature type="topological domain" description="Extracellular" evidence="33">
    <location>
        <begin position="36"/>
        <end position="161"/>
    </location>
</feature>
<feature type="transmembrane region" description="Helical" evidence="1">
    <location>
        <begin position="162"/>
        <end position="182"/>
    </location>
</feature>
<feature type="topological domain" description="Cytoplasmic" evidence="1">
    <location>
        <begin position="183"/>
        <end position="223"/>
    </location>
</feature>
<feature type="domain" description="Ig-like V-type">
    <location>
        <begin position="39"/>
        <end position="140"/>
    </location>
</feature>
<feature type="region of interest" description="Homodimerization" evidence="21">
    <location>
        <begin position="46"/>
        <end position="50"/>
    </location>
</feature>
<feature type="region of interest" description="Important for interaction with CD80 and CD86" evidence="24">
    <location>
        <begin position="134"/>
        <end position="139"/>
    </location>
</feature>
<feature type="region of interest" description="Homodimerization" evidence="21 24">
    <location>
        <begin position="150"/>
        <end position="155"/>
    </location>
</feature>
<feature type="modified residue" description="Phosphotyrosine; by TXK and JAK2" evidence="5 25 28">
    <location>
        <position position="201"/>
    </location>
</feature>
<feature type="glycosylation site" description="N-linked (GlcNAc...) asparagine" evidence="9 15 21">
    <location>
        <position position="113"/>
    </location>
</feature>
<feature type="glycosylation site" description="N-linked (GlcNAc...) asparagine" evidence="9 15">
    <location>
        <position position="145"/>
    </location>
</feature>
<feature type="disulfide bond" evidence="8 9 21 24 26 29 34 35">
    <location>
        <begin position="58"/>
        <end position="129"/>
    </location>
</feature>
<feature type="disulfide bond" evidence="8 9 21 24 26 29 34 35">
    <location>
        <begin position="85"/>
        <end position="103"/>
    </location>
</feature>
<feature type="disulfide bond" description="Interchain" evidence="24 29 34">
    <location>
        <position position="157"/>
    </location>
</feature>
<feature type="splice variant" id="VSP_041284" description="In isoform 2 and isoform 3." evidence="30">
    <location>
        <begin position="38"/>
        <end position="204"/>
    </location>
</feature>
<feature type="splice variant" id="VSP_041285" description="In isoform 4." evidence="30">
    <original>C</original>
    <variation>S</variation>
    <location>
        <position position="58"/>
    </location>
</feature>
<feature type="splice variant" id="VSP_041286" description="In isoform 4." evidence="30">
    <location>
        <begin position="59"/>
        <end position="204"/>
    </location>
</feature>
<feature type="splice variant" id="VSP_047238" description="In isoform 5." evidence="31">
    <original>DPEPCPDSDFLLWILAAVSSGL</original>
    <variation>AKEKKPSYNRGLCENAPNRARM</variation>
    <location>
        <begin position="153"/>
        <end position="174"/>
    </location>
</feature>
<feature type="splice variant" id="VSP_047239" description="In isoform 5." evidence="31">
    <location>
        <begin position="175"/>
        <end position="223"/>
    </location>
</feature>
<feature type="splice variant" id="VSP_041287" description="In isoform 3 and isoform 4." evidence="30">
    <original>PPTEPECEKQFQPYFIPIN</original>
    <variation>KEKKPSYNRGLCENAPNRARM</variation>
    <location>
        <begin position="205"/>
        <end position="223"/>
    </location>
</feature>
<feature type="sequence variant" id="VAR_013577" description="Increased risk for Graves disease, insulin-dependent diabetes mellitus, thyroid-associated orbitopathy, systemic lupus erythematosus and susceptibility to HBV infection; dbSNP:rs231775." evidence="3 6 7 12 17 20 27">
    <original>T</original>
    <variation>A</variation>
    <location>
        <position position="17"/>
    </location>
</feature>
<feature type="sequence variant" id="VAR_072681" description="In IDAIL; dbSNP:rs606231422." evidence="23">
    <original>R</original>
    <variation>W</variation>
    <location>
        <position position="70"/>
    </location>
</feature>
<feature type="mutagenesis site" description="Strongly reduced interaction with CD80, CD86 and ICOSLG." evidence="24">
    <original>V</original>
    <variation>D</variation>
    <location>
        <position position="45"/>
    </location>
</feature>
<feature type="mutagenesis site" description="Strongly reduced interaction with CD80, CD86 and ICOSLG." evidence="24">
    <original>L</original>
    <variation>D</variation>
    <location>
        <position position="47"/>
    </location>
</feature>
<feature type="mutagenesis site" description="Strongly reduced interaction with CD80, CD86 and ICOSLG." evidence="24">
    <original>S</original>
    <variation>A</variation>
    <location>
        <position position="49"/>
    </location>
</feature>
<feature type="mutagenesis site" description="Strongly reduced interaction with CD80, CD86 and ICOSLG." evidence="24">
    <original>R</original>
    <variation>A</variation>
    <variation>D</variation>
    <location>
        <position position="70"/>
    </location>
</feature>
<feature type="mutagenesis site" description="Strongly reduced interaction with CD80, CD86 and ICOSLG." evidence="24">
    <original>K</original>
    <variation>A</variation>
    <variation>D</variation>
    <location>
        <position position="130"/>
    </location>
</feature>
<feature type="mutagenesis site" description="Strongly reduced interaction with CD80, CD86 and ICOSLG." evidence="24">
    <original>E</original>
    <variation>A</variation>
    <variation>R</variation>
    <location>
        <position position="132"/>
    </location>
</feature>
<feature type="mutagenesis site" description="Strongly reduced interaction with CD80, CD86 and ICOSLG." evidence="24">
    <original>Y</original>
    <variation>A</variation>
    <variation>D</variation>
    <location>
        <position position="139"/>
    </location>
</feature>
<feature type="mutagenesis site" description="Strongly reduced interaction with CD80, CD86 and ICOSLG." evidence="24">
    <original>I</original>
    <variation>A</variation>
    <variation>D</variation>
    <location>
        <position position="143"/>
    </location>
</feature>
<feature type="sequence conflict" description="In Ref. 3; ABG85285." evidence="32" ref="3">
    <original>A</original>
    <variation>V</variation>
    <location>
        <position position="37"/>
    </location>
</feature>
<feature type="sequence conflict" description="In Ref. 8; AAA52773." evidence="32" ref="8">
    <original>T</original>
    <variation>A</variation>
    <location>
        <position position="147"/>
    </location>
</feature>
<feature type="strand" evidence="40">
    <location>
        <begin position="39"/>
        <end position="41"/>
    </location>
</feature>
<feature type="strand" evidence="39">
    <location>
        <begin position="44"/>
        <end position="47"/>
    </location>
</feature>
<feature type="strand" evidence="38">
    <location>
        <begin position="50"/>
        <end position="52"/>
    </location>
</feature>
<feature type="strand" evidence="39">
    <location>
        <begin position="54"/>
        <end position="60"/>
    </location>
</feature>
<feature type="strand" evidence="37">
    <location>
        <begin position="64"/>
        <end position="66"/>
    </location>
</feature>
<feature type="strand" evidence="39">
    <location>
        <begin position="68"/>
        <end position="77"/>
    </location>
</feature>
<feature type="strand" evidence="39">
    <location>
        <begin position="80"/>
        <end position="90"/>
    </location>
</feature>
<feature type="turn" evidence="41">
    <location>
        <begin position="91"/>
        <end position="93"/>
    </location>
</feature>
<feature type="strand" evidence="41">
    <location>
        <begin position="95"/>
        <end position="99"/>
    </location>
</feature>
<feature type="strand" evidence="39">
    <location>
        <begin position="102"/>
        <end position="108"/>
    </location>
</feature>
<feature type="strand" evidence="39">
    <location>
        <begin position="111"/>
        <end position="116"/>
    </location>
</feature>
<feature type="helix" evidence="39">
    <location>
        <begin position="121"/>
        <end position="123"/>
    </location>
</feature>
<feature type="strand" evidence="39">
    <location>
        <begin position="125"/>
        <end position="138"/>
    </location>
</feature>
<feature type="strand" evidence="39">
    <location>
        <begin position="140"/>
        <end position="143"/>
    </location>
</feature>
<feature type="strand" evidence="39">
    <location>
        <begin position="147"/>
        <end position="150"/>
    </location>
</feature>
<feature type="strand" evidence="36">
    <location>
        <begin position="156"/>
        <end position="158"/>
    </location>
</feature>